<reference key="1">
    <citation type="submission" date="2009-05" db="EMBL/GenBank/DDBJ databases">
        <title>Complete sequence of Tolumonas auensis DSM 9187.</title>
        <authorList>
            <consortium name="US DOE Joint Genome Institute"/>
            <person name="Lucas S."/>
            <person name="Copeland A."/>
            <person name="Lapidus A."/>
            <person name="Glavina del Rio T."/>
            <person name="Tice H."/>
            <person name="Bruce D."/>
            <person name="Goodwin L."/>
            <person name="Pitluck S."/>
            <person name="Chertkov O."/>
            <person name="Brettin T."/>
            <person name="Detter J.C."/>
            <person name="Han C."/>
            <person name="Larimer F."/>
            <person name="Land M."/>
            <person name="Hauser L."/>
            <person name="Kyrpides N."/>
            <person name="Mikhailova N."/>
            <person name="Spring S."/>
            <person name="Beller H."/>
        </authorList>
    </citation>
    <scope>NUCLEOTIDE SEQUENCE [LARGE SCALE GENOMIC DNA]</scope>
    <source>
        <strain>DSM 9187 / NBRC 110442 / TA 4</strain>
    </source>
</reference>
<proteinExistence type="inferred from homology"/>
<organism>
    <name type="scientific">Tolumonas auensis (strain DSM 9187 / NBRC 110442 / TA 4)</name>
    <dbReference type="NCBI Taxonomy" id="595494"/>
    <lineage>
        <taxon>Bacteria</taxon>
        <taxon>Pseudomonadati</taxon>
        <taxon>Pseudomonadota</taxon>
        <taxon>Gammaproteobacteria</taxon>
        <taxon>Aeromonadales</taxon>
        <taxon>Aeromonadaceae</taxon>
        <taxon>Tolumonas</taxon>
    </lineage>
</organism>
<feature type="chain" id="PRO_1000212182" description="GMP reductase">
    <location>
        <begin position="1"/>
        <end position="347"/>
    </location>
</feature>
<feature type="active site" description="Thioimidate intermediate" evidence="1">
    <location>
        <position position="186"/>
    </location>
</feature>
<feature type="binding site" evidence="1">
    <location>
        <begin position="108"/>
        <end position="131"/>
    </location>
    <ligand>
        <name>NADP(+)</name>
        <dbReference type="ChEBI" id="CHEBI:58349"/>
    </ligand>
</feature>
<feature type="binding site" evidence="1">
    <location>
        <position position="181"/>
    </location>
    <ligand>
        <name>K(+)</name>
        <dbReference type="ChEBI" id="CHEBI:29103"/>
    </ligand>
</feature>
<feature type="binding site" evidence="1">
    <location>
        <position position="183"/>
    </location>
    <ligand>
        <name>K(+)</name>
        <dbReference type="ChEBI" id="CHEBI:29103"/>
    </ligand>
</feature>
<feature type="binding site" evidence="1">
    <location>
        <begin position="216"/>
        <end position="239"/>
    </location>
    <ligand>
        <name>NADP(+)</name>
        <dbReference type="ChEBI" id="CHEBI:58349"/>
    </ligand>
</feature>
<gene>
    <name evidence="1" type="primary">guaC</name>
    <name type="ordered locus">Tola_2494</name>
</gene>
<accession>C4LAB3</accession>
<name>GUAC_TOLAT</name>
<comment type="function">
    <text evidence="1">Catalyzes the irreversible NADPH-dependent deamination of GMP to IMP. It functions in the conversion of nucleobase, nucleoside and nucleotide derivatives of G to A nucleotides, and in maintaining the intracellular balance of A and G nucleotides.</text>
</comment>
<comment type="catalytic activity">
    <reaction evidence="1">
        <text>IMP + NH4(+) + NADP(+) = GMP + NADPH + 2 H(+)</text>
        <dbReference type="Rhea" id="RHEA:17185"/>
        <dbReference type="ChEBI" id="CHEBI:15378"/>
        <dbReference type="ChEBI" id="CHEBI:28938"/>
        <dbReference type="ChEBI" id="CHEBI:57783"/>
        <dbReference type="ChEBI" id="CHEBI:58053"/>
        <dbReference type="ChEBI" id="CHEBI:58115"/>
        <dbReference type="ChEBI" id="CHEBI:58349"/>
        <dbReference type="EC" id="1.7.1.7"/>
    </reaction>
</comment>
<comment type="subunit">
    <text evidence="1">Homotetramer.</text>
</comment>
<comment type="similarity">
    <text evidence="1">Belongs to the IMPDH/GMPR family. GuaC type 1 subfamily.</text>
</comment>
<sequence length="347" mass="37709">MRIEEDLKLGFKDVLFRPKRSTLSSRSQVELHREFRFRHTQTSWRGVPIIAANMDTVGTFAMAKALASFDVMTAIHKHYTEQEWQTFVQNSSDPLLQYCMVSTGTSNNDFLKLQRILALSPALRFICVDVANGYSEHFADFVKIVRETFPQHVICAGNVVTGEMVEELILSGADIVKVGIGPGSVCTTRVKTGVGYPQLSAIIECADAAHGLGGQIVGDGGCTCPGDVAKAFGGGADFVMLGGMLAAHEESGGNKFERDGKTFMRFYGMSSSTAMEQHAGGIAHYRASEGKTVELPFRGPVSATIQDILGGVRSTCTYVGAAKLKELTKRTTFIRVSEQENPVYGQE</sequence>
<protein>
    <recommendedName>
        <fullName evidence="1">GMP reductase</fullName>
        <ecNumber evidence="1">1.7.1.7</ecNumber>
    </recommendedName>
    <alternativeName>
        <fullName evidence="1">Guanosine 5'-monophosphate oxidoreductase</fullName>
        <shortName evidence="1">Guanosine monophosphate reductase</shortName>
    </alternativeName>
</protein>
<evidence type="ECO:0000255" key="1">
    <source>
        <dbReference type="HAMAP-Rule" id="MF_00596"/>
    </source>
</evidence>
<dbReference type="EC" id="1.7.1.7" evidence="1"/>
<dbReference type="EMBL" id="CP001616">
    <property type="protein sequence ID" value="ACQ94088.1"/>
    <property type="molecule type" value="Genomic_DNA"/>
</dbReference>
<dbReference type="RefSeq" id="WP_015879537.1">
    <property type="nucleotide sequence ID" value="NC_012691.1"/>
</dbReference>
<dbReference type="SMR" id="C4LAB3"/>
<dbReference type="STRING" id="595494.Tola_2494"/>
<dbReference type="KEGG" id="tau:Tola_2494"/>
<dbReference type="eggNOG" id="COG0516">
    <property type="taxonomic scope" value="Bacteria"/>
</dbReference>
<dbReference type="HOGENOM" id="CLU_022552_5_3_6"/>
<dbReference type="OrthoDB" id="9805398at2"/>
<dbReference type="Proteomes" id="UP000009073">
    <property type="component" value="Chromosome"/>
</dbReference>
<dbReference type="GO" id="GO:0005829">
    <property type="term" value="C:cytosol"/>
    <property type="evidence" value="ECO:0007669"/>
    <property type="project" value="TreeGrafter"/>
</dbReference>
<dbReference type="GO" id="GO:1902560">
    <property type="term" value="C:GMP reductase complex"/>
    <property type="evidence" value="ECO:0007669"/>
    <property type="project" value="InterPro"/>
</dbReference>
<dbReference type="GO" id="GO:0003920">
    <property type="term" value="F:GMP reductase activity"/>
    <property type="evidence" value="ECO:0007669"/>
    <property type="project" value="UniProtKB-UniRule"/>
</dbReference>
<dbReference type="GO" id="GO:0046872">
    <property type="term" value="F:metal ion binding"/>
    <property type="evidence" value="ECO:0007669"/>
    <property type="project" value="UniProtKB-KW"/>
</dbReference>
<dbReference type="GO" id="GO:0006163">
    <property type="term" value="P:purine nucleotide metabolic process"/>
    <property type="evidence" value="ECO:0007669"/>
    <property type="project" value="UniProtKB-UniRule"/>
</dbReference>
<dbReference type="CDD" id="cd00381">
    <property type="entry name" value="IMPDH"/>
    <property type="match status" value="1"/>
</dbReference>
<dbReference type="FunFam" id="3.20.20.70:FF:000012">
    <property type="entry name" value="GMP reductase"/>
    <property type="match status" value="1"/>
</dbReference>
<dbReference type="Gene3D" id="3.20.20.70">
    <property type="entry name" value="Aldolase class I"/>
    <property type="match status" value="1"/>
</dbReference>
<dbReference type="HAMAP" id="MF_00596">
    <property type="entry name" value="GMP_reduct_type1"/>
    <property type="match status" value="1"/>
</dbReference>
<dbReference type="InterPro" id="IPR013785">
    <property type="entry name" value="Aldolase_TIM"/>
</dbReference>
<dbReference type="InterPro" id="IPR050139">
    <property type="entry name" value="GMP_reductase"/>
</dbReference>
<dbReference type="InterPro" id="IPR005993">
    <property type="entry name" value="GMPR"/>
</dbReference>
<dbReference type="InterPro" id="IPR015875">
    <property type="entry name" value="IMP_DH/GMP_Rdtase_CS"/>
</dbReference>
<dbReference type="InterPro" id="IPR001093">
    <property type="entry name" value="IMP_DH_GMPRt"/>
</dbReference>
<dbReference type="NCBIfam" id="TIGR01305">
    <property type="entry name" value="GMP_reduct_1"/>
    <property type="match status" value="1"/>
</dbReference>
<dbReference type="NCBIfam" id="NF003470">
    <property type="entry name" value="PRK05096.1"/>
    <property type="match status" value="1"/>
</dbReference>
<dbReference type="PANTHER" id="PTHR43170">
    <property type="entry name" value="GMP REDUCTASE"/>
    <property type="match status" value="1"/>
</dbReference>
<dbReference type="PANTHER" id="PTHR43170:SF5">
    <property type="entry name" value="GMP REDUCTASE"/>
    <property type="match status" value="1"/>
</dbReference>
<dbReference type="Pfam" id="PF00478">
    <property type="entry name" value="IMPDH"/>
    <property type="match status" value="1"/>
</dbReference>
<dbReference type="PIRSF" id="PIRSF000235">
    <property type="entry name" value="GMP_reductase"/>
    <property type="match status" value="1"/>
</dbReference>
<dbReference type="SMART" id="SM01240">
    <property type="entry name" value="IMPDH"/>
    <property type="match status" value="1"/>
</dbReference>
<dbReference type="SUPFAM" id="SSF51412">
    <property type="entry name" value="Inosine monophosphate dehydrogenase (IMPDH)"/>
    <property type="match status" value="1"/>
</dbReference>
<dbReference type="PROSITE" id="PS00487">
    <property type="entry name" value="IMP_DH_GMP_RED"/>
    <property type="match status" value="1"/>
</dbReference>
<keyword id="KW-0479">Metal-binding</keyword>
<keyword id="KW-0521">NADP</keyword>
<keyword id="KW-0560">Oxidoreductase</keyword>
<keyword id="KW-0630">Potassium</keyword>
<keyword id="KW-1185">Reference proteome</keyword>